<reference key="1">
    <citation type="journal article" date="2009" name="Appl. Environ. Microbiol.">
        <title>Complete genome sequence of the chemolithoautotrophic marine magnetotactic coccus strain MC-1.</title>
        <authorList>
            <person name="Schubbe S."/>
            <person name="Williams T.J."/>
            <person name="Xie G."/>
            <person name="Kiss H.E."/>
            <person name="Brettin T.S."/>
            <person name="Martinez D."/>
            <person name="Ross C.A."/>
            <person name="Schuler D."/>
            <person name="Cox B.L."/>
            <person name="Nealson K.H."/>
            <person name="Bazylinski D.A."/>
        </authorList>
    </citation>
    <scope>NUCLEOTIDE SEQUENCE [LARGE SCALE GENOMIC DNA]</scope>
    <source>
        <strain>ATCC BAA-1437 / JCM 17883 / MC-1</strain>
    </source>
</reference>
<comment type="function">
    <text evidence="1">Involved in the biosynthesis of branched-chain amino acids (BCAA). Catalyzes an alkyl-migration followed by a ketol-acid reduction of (S)-2-acetolactate (S2AL) to yield (R)-2,3-dihydroxy-isovalerate. In the isomerase reaction, S2AL is rearranged via a Mg-dependent methyl migration to produce 3-hydroxy-3-methyl-2-ketobutyrate (HMKB). In the reductase reaction, this 2-ketoacid undergoes a metal-dependent reduction by NADPH to yield (R)-2,3-dihydroxy-isovalerate.</text>
</comment>
<comment type="catalytic activity">
    <reaction evidence="1">
        <text>(2R)-2,3-dihydroxy-3-methylbutanoate + NADP(+) = (2S)-2-acetolactate + NADPH + H(+)</text>
        <dbReference type="Rhea" id="RHEA:22068"/>
        <dbReference type="ChEBI" id="CHEBI:15378"/>
        <dbReference type="ChEBI" id="CHEBI:49072"/>
        <dbReference type="ChEBI" id="CHEBI:57783"/>
        <dbReference type="ChEBI" id="CHEBI:58349"/>
        <dbReference type="ChEBI" id="CHEBI:58476"/>
        <dbReference type="EC" id="1.1.1.86"/>
    </reaction>
</comment>
<comment type="catalytic activity">
    <reaction evidence="1">
        <text>(2R,3R)-2,3-dihydroxy-3-methylpentanoate + NADP(+) = (S)-2-ethyl-2-hydroxy-3-oxobutanoate + NADPH + H(+)</text>
        <dbReference type="Rhea" id="RHEA:13493"/>
        <dbReference type="ChEBI" id="CHEBI:15378"/>
        <dbReference type="ChEBI" id="CHEBI:49256"/>
        <dbReference type="ChEBI" id="CHEBI:49258"/>
        <dbReference type="ChEBI" id="CHEBI:57783"/>
        <dbReference type="ChEBI" id="CHEBI:58349"/>
        <dbReference type="EC" id="1.1.1.86"/>
    </reaction>
</comment>
<comment type="cofactor">
    <cofactor evidence="1">
        <name>Mg(2+)</name>
        <dbReference type="ChEBI" id="CHEBI:18420"/>
    </cofactor>
    <text evidence="1">Binds 2 magnesium ions per subunit.</text>
</comment>
<comment type="pathway">
    <text evidence="1">Amino-acid biosynthesis; L-isoleucine biosynthesis; L-isoleucine from 2-oxobutanoate: step 2/4.</text>
</comment>
<comment type="pathway">
    <text evidence="1">Amino-acid biosynthesis; L-valine biosynthesis; L-valine from pyruvate: step 2/4.</text>
</comment>
<comment type="similarity">
    <text evidence="1">Belongs to the ketol-acid reductoisomerase family.</text>
</comment>
<evidence type="ECO:0000255" key="1">
    <source>
        <dbReference type="HAMAP-Rule" id="MF_00435"/>
    </source>
</evidence>
<evidence type="ECO:0000255" key="2">
    <source>
        <dbReference type="PROSITE-ProRule" id="PRU01197"/>
    </source>
</evidence>
<evidence type="ECO:0000255" key="3">
    <source>
        <dbReference type="PROSITE-ProRule" id="PRU01198"/>
    </source>
</evidence>
<keyword id="KW-0028">Amino-acid biosynthesis</keyword>
<keyword id="KW-0100">Branched-chain amino acid biosynthesis</keyword>
<keyword id="KW-0460">Magnesium</keyword>
<keyword id="KW-0479">Metal-binding</keyword>
<keyword id="KW-0521">NADP</keyword>
<keyword id="KW-0560">Oxidoreductase</keyword>
<keyword id="KW-1185">Reference proteome</keyword>
<proteinExistence type="inferred from homology"/>
<sequence>MKVYYDSDADLGLIQSKKVAIIGYGSQGHAHALNLKDSGVDVVVGLRAGSSSWMKAEGSGLQVAEVADAVGGADLVMMLVPDEHQAKIYREQIAPNLKDDAALVFAHGFNIHYGQIEAPAGVDVFLVAPKGPGHLVRAEYLRGGGVPSLVAIHQNATGKALDLALSYASANGGGRAGIIETSFKEETETDLFGEQAVLCGGITALIQAGFETLVEAGYAPEMAYFECLHETKLIVDLIYEGGIANMRYSISNTAEYGDLTRGPRVITEETKKEMKKILDEIQTGEFPREWISENISGRPKFLGLRRRGEAHQIEQVGAKLRAMMPWIQASKLVDKAKN</sequence>
<protein>
    <recommendedName>
        <fullName evidence="1">Ketol-acid reductoisomerase (NADP(+))</fullName>
        <shortName evidence="1">KARI</shortName>
        <ecNumber evidence="1">1.1.1.86</ecNumber>
    </recommendedName>
    <alternativeName>
        <fullName evidence="1">Acetohydroxy-acid isomeroreductase</fullName>
        <shortName evidence="1">AHIR</shortName>
    </alternativeName>
    <alternativeName>
        <fullName evidence="1">Alpha-keto-beta-hydroxylacyl reductoisomerase</fullName>
    </alternativeName>
    <alternativeName>
        <fullName evidence="1">Ketol-acid reductoisomerase type 1</fullName>
    </alternativeName>
    <alternativeName>
        <fullName evidence="1">Ketol-acid reductoisomerase type I</fullName>
    </alternativeName>
</protein>
<feature type="chain" id="PRO_1000050525" description="Ketol-acid reductoisomerase (NADP(+))">
    <location>
        <begin position="1"/>
        <end position="338"/>
    </location>
</feature>
<feature type="domain" description="KARI N-terminal Rossmann" evidence="2">
    <location>
        <begin position="1"/>
        <end position="181"/>
    </location>
</feature>
<feature type="domain" description="KARI C-terminal knotted" evidence="3">
    <location>
        <begin position="182"/>
        <end position="327"/>
    </location>
</feature>
<feature type="active site" evidence="1">
    <location>
        <position position="107"/>
    </location>
</feature>
<feature type="binding site" evidence="1">
    <location>
        <begin position="24"/>
        <end position="27"/>
    </location>
    <ligand>
        <name>NADP(+)</name>
        <dbReference type="ChEBI" id="CHEBI:58349"/>
    </ligand>
</feature>
<feature type="binding site" evidence="1">
    <location>
        <position position="47"/>
    </location>
    <ligand>
        <name>NADP(+)</name>
        <dbReference type="ChEBI" id="CHEBI:58349"/>
    </ligand>
</feature>
<feature type="binding site" evidence="1">
    <location>
        <position position="50"/>
    </location>
    <ligand>
        <name>NADP(+)</name>
        <dbReference type="ChEBI" id="CHEBI:58349"/>
    </ligand>
</feature>
<feature type="binding site" evidence="1">
    <location>
        <position position="52"/>
    </location>
    <ligand>
        <name>NADP(+)</name>
        <dbReference type="ChEBI" id="CHEBI:58349"/>
    </ligand>
</feature>
<feature type="binding site" evidence="1">
    <location>
        <begin position="82"/>
        <end position="85"/>
    </location>
    <ligand>
        <name>NADP(+)</name>
        <dbReference type="ChEBI" id="CHEBI:58349"/>
    </ligand>
</feature>
<feature type="binding site" evidence="1">
    <location>
        <position position="133"/>
    </location>
    <ligand>
        <name>NADP(+)</name>
        <dbReference type="ChEBI" id="CHEBI:58349"/>
    </ligand>
</feature>
<feature type="binding site" evidence="1">
    <location>
        <position position="190"/>
    </location>
    <ligand>
        <name>Mg(2+)</name>
        <dbReference type="ChEBI" id="CHEBI:18420"/>
        <label>1</label>
    </ligand>
</feature>
<feature type="binding site" evidence="1">
    <location>
        <position position="190"/>
    </location>
    <ligand>
        <name>Mg(2+)</name>
        <dbReference type="ChEBI" id="CHEBI:18420"/>
        <label>2</label>
    </ligand>
</feature>
<feature type="binding site" evidence="1">
    <location>
        <position position="194"/>
    </location>
    <ligand>
        <name>Mg(2+)</name>
        <dbReference type="ChEBI" id="CHEBI:18420"/>
        <label>1</label>
    </ligand>
</feature>
<feature type="binding site" evidence="1">
    <location>
        <position position="226"/>
    </location>
    <ligand>
        <name>Mg(2+)</name>
        <dbReference type="ChEBI" id="CHEBI:18420"/>
        <label>2</label>
    </ligand>
</feature>
<feature type="binding site" evidence="1">
    <location>
        <position position="230"/>
    </location>
    <ligand>
        <name>Mg(2+)</name>
        <dbReference type="ChEBI" id="CHEBI:18420"/>
        <label>2</label>
    </ligand>
</feature>
<feature type="binding site" evidence="1">
    <location>
        <position position="251"/>
    </location>
    <ligand>
        <name>substrate</name>
    </ligand>
</feature>
<organism>
    <name type="scientific">Magnetococcus marinus (strain ATCC BAA-1437 / JCM 17883 / MC-1)</name>
    <dbReference type="NCBI Taxonomy" id="156889"/>
    <lineage>
        <taxon>Bacteria</taxon>
        <taxon>Pseudomonadati</taxon>
        <taxon>Pseudomonadota</taxon>
        <taxon>Alphaproteobacteria</taxon>
        <taxon>Magnetococcales</taxon>
        <taxon>Magnetococcaceae</taxon>
        <taxon>Magnetococcus</taxon>
    </lineage>
</organism>
<gene>
    <name evidence="1" type="primary">ilvC</name>
    <name type="ordered locus">Mmc1_0900</name>
</gene>
<dbReference type="EC" id="1.1.1.86" evidence="1"/>
<dbReference type="EMBL" id="CP000471">
    <property type="protein sequence ID" value="ABK43419.1"/>
    <property type="molecule type" value="Genomic_DNA"/>
</dbReference>
<dbReference type="RefSeq" id="WP_011712576.1">
    <property type="nucleotide sequence ID" value="NC_008576.1"/>
</dbReference>
<dbReference type="SMR" id="A0L626"/>
<dbReference type="STRING" id="156889.Mmc1_0900"/>
<dbReference type="KEGG" id="mgm:Mmc1_0900"/>
<dbReference type="eggNOG" id="COG0059">
    <property type="taxonomic scope" value="Bacteria"/>
</dbReference>
<dbReference type="HOGENOM" id="CLU_033821_0_1_5"/>
<dbReference type="OrthoDB" id="9804088at2"/>
<dbReference type="UniPathway" id="UPA00047">
    <property type="reaction ID" value="UER00056"/>
</dbReference>
<dbReference type="UniPathway" id="UPA00049">
    <property type="reaction ID" value="UER00060"/>
</dbReference>
<dbReference type="Proteomes" id="UP000002586">
    <property type="component" value="Chromosome"/>
</dbReference>
<dbReference type="GO" id="GO:0005829">
    <property type="term" value="C:cytosol"/>
    <property type="evidence" value="ECO:0007669"/>
    <property type="project" value="TreeGrafter"/>
</dbReference>
<dbReference type="GO" id="GO:0004455">
    <property type="term" value="F:ketol-acid reductoisomerase activity"/>
    <property type="evidence" value="ECO:0007669"/>
    <property type="project" value="UniProtKB-UniRule"/>
</dbReference>
<dbReference type="GO" id="GO:0000287">
    <property type="term" value="F:magnesium ion binding"/>
    <property type="evidence" value="ECO:0007669"/>
    <property type="project" value="UniProtKB-UniRule"/>
</dbReference>
<dbReference type="GO" id="GO:0050661">
    <property type="term" value="F:NADP binding"/>
    <property type="evidence" value="ECO:0007669"/>
    <property type="project" value="InterPro"/>
</dbReference>
<dbReference type="GO" id="GO:0009097">
    <property type="term" value="P:isoleucine biosynthetic process"/>
    <property type="evidence" value="ECO:0007669"/>
    <property type="project" value="UniProtKB-UniRule"/>
</dbReference>
<dbReference type="GO" id="GO:0009099">
    <property type="term" value="P:L-valine biosynthetic process"/>
    <property type="evidence" value="ECO:0007669"/>
    <property type="project" value="UniProtKB-UniRule"/>
</dbReference>
<dbReference type="FunFam" id="3.40.50.720:FF:000023">
    <property type="entry name" value="Ketol-acid reductoisomerase (NADP(+))"/>
    <property type="match status" value="1"/>
</dbReference>
<dbReference type="Gene3D" id="6.10.240.10">
    <property type="match status" value="1"/>
</dbReference>
<dbReference type="Gene3D" id="3.40.50.720">
    <property type="entry name" value="NAD(P)-binding Rossmann-like Domain"/>
    <property type="match status" value="1"/>
</dbReference>
<dbReference type="HAMAP" id="MF_00435">
    <property type="entry name" value="IlvC"/>
    <property type="match status" value="1"/>
</dbReference>
<dbReference type="InterPro" id="IPR008927">
    <property type="entry name" value="6-PGluconate_DH-like_C_sf"/>
</dbReference>
<dbReference type="InterPro" id="IPR013023">
    <property type="entry name" value="KARI"/>
</dbReference>
<dbReference type="InterPro" id="IPR000506">
    <property type="entry name" value="KARI_C"/>
</dbReference>
<dbReference type="InterPro" id="IPR013116">
    <property type="entry name" value="KARI_N"/>
</dbReference>
<dbReference type="InterPro" id="IPR014359">
    <property type="entry name" value="KARI_prok"/>
</dbReference>
<dbReference type="InterPro" id="IPR036291">
    <property type="entry name" value="NAD(P)-bd_dom_sf"/>
</dbReference>
<dbReference type="NCBIfam" id="TIGR00465">
    <property type="entry name" value="ilvC"/>
    <property type="match status" value="1"/>
</dbReference>
<dbReference type="NCBIfam" id="NF004017">
    <property type="entry name" value="PRK05479.1"/>
    <property type="match status" value="1"/>
</dbReference>
<dbReference type="NCBIfam" id="NF009940">
    <property type="entry name" value="PRK13403.1"/>
    <property type="match status" value="1"/>
</dbReference>
<dbReference type="PANTHER" id="PTHR21371">
    <property type="entry name" value="KETOL-ACID REDUCTOISOMERASE, MITOCHONDRIAL"/>
    <property type="match status" value="1"/>
</dbReference>
<dbReference type="PANTHER" id="PTHR21371:SF1">
    <property type="entry name" value="KETOL-ACID REDUCTOISOMERASE, MITOCHONDRIAL"/>
    <property type="match status" value="1"/>
</dbReference>
<dbReference type="Pfam" id="PF01450">
    <property type="entry name" value="KARI_C"/>
    <property type="match status" value="1"/>
</dbReference>
<dbReference type="Pfam" id="PF07991">
    <property type="entry name" value="KARI_N"/>
    <property type="match status" value="1"/>
</dbReference>
<dbReference type="PIRSF" id="PIRSF000116">
    <property type="entry name" value="IlvC_gammaproteo"/>
    <property type="match status" value="1"/>
</dbReference>
<dbReference type="SUPFAM" id="SSF48179">
    <property type="entry name" value="6-phosphogluconate dehydrogenase C-terminal domain-like"/>
    <property type="match status" value="1"/>
</dbReference>
<dbReference type="SUPFAM" id="SSF51735">
    <property type="entry name" value="NAD(P)-binding Rossmann-fold domains"/>
    <property type="match status" value="1"/>
</dbReference>
<dbReference type="PROSITE" id="PS51851">
    <property type="entry name" value="KARI_C"/>
    <property type="match status" value="1"/>
</dbReference>
<dbReference type="PROSITE" id="PS51850">
    <property type="entry name" value="KARI_N"/>
    <property type="match status" value="1"/>
</dbReference>
<name>ILVC_MAGMM</name>
<accession>A0L626</accession>